<reference key="1">
    <citation type="journal article" date="2008" name="BMC Evol. Biol.">
        <title>Molecular evolution of the cytochrome c oxidase subunit 5A gene in primates.</title>
        <authorList>
            <person name="Uddin M."/>
            <person name="Opazo J.C."/>
            <person name="Wildman D.E."/>
            <person name="Sherwood C.C."/>
            <person name="Hof P.R."/>
            <person name="Goodman M."/>
            <person name="Grossman L.I."/>
        </authorList>
    </citation>
    <scope>NUCLEOTIDE SEQUENCE [MRNA]</scope>
</reference>
<protein>
    <recommendedName>
        <fullName>Cytochrome c oxidase subunit 5A, mitochondrial</fullName>
    </recommendedName>
    <alternativeName>
        <fullName>Cytochrome c oxidase polypeptide Va</fullName>
    </alternativeName>
</protein>
<proteinExistence type="evidence at transcript level"/>
<sequence length="150" mass="16529">MLGAALRRCAVAATSRAGPRGLLHSAPNPGPAAAIQSVRCYSHGSSETDEEFDARWVTYFNKPDIDAWELRKGINTLVTYDLVPEPKIIDAALRACRRLNDFASTVRILEAVKDKAGPHKEIYPYVIQELRPTLNELGISTPEELGLDKV</sequence>
<gene>
    <name type="primary">COX5A</name>
</gene>
<feature type="transit peptide" description="Mitochondrion" evidence="1">
    <location>
        <begin position="1"/>
        <end position="41"/>
    </location>
</feature>
<feature type="chain" id="PRO_0000355990" description="Cytochrome c oxidase subunit 5A, mitochondrial">
    <location>
        <begin position="42"/>
        <end position="150"/>
    </location>
</feature>
<feature type="short sequence motif" description="SIFI-degron" evidence="4">
    <location>
        <begin position="2"/>
        <end position="17"/>
    </location>
</feature>
<feature type="modified residue" description="N6-acetyllysine" evidence="3">
    <location>
        <position position="87"/>
    </location>
</feature>
<feature type="modified residue" description="N6-acetyllysine" evidence="3">
    <location>
        <position position="113"/>
    </location>
</feature>
<feature type="modified residue" description="Phosphothreonine" evidence="4">
    <location>
        <position position="141"/>
    </location>
</feature>
<name>COX5A_SAGLB</name>
<keyword id="KW-0007">Acetylation</keyword>
<keyword id="KW-0349">Heme</keyword>
<keyword id="KW-0408">Iron</keyword>
<keyword id="KW-0472">Membrane</keyword>
<keyword id="KW-0479">Metal-binding</keyword>
<keyword id="KW-0496">Mitochondrion</keyword>
<keyword id="KW-0999">Mitochondrion inner membrane</keyword>
<keyword id="KW-0597">Phosphoprotein</keyword>
<keyword id="KW-0809">Transit peptide</keyword>
<keyword id="KW-0832">Ubl conjugation</keyword>
<accession>B0VYY0</accession>
<dbReference type="EMBL" id="DQ987247">
    <property type="protein sequence ID" value="ABK92294.1"/>
    <property type="molecule type" value="mRNA"/>
</dbReference>
<dbReference type="SMR" id="B0VYY0"/>
<dbReference type="UniPathway" id="UPA00705"/>
<dbReference type="GO" id="GO:0005743">
    <property type="term" value="C:mitochondrial inner membrane"/>
    <property type="evidence" value="ECO:0007669"/>
    <property type="project" value="UniProtKB-SubCell"/>
</dbReference>
<dbReference type="GO" id="GO:0045277">
    <property type="term" value="C:respiratory chain complex IV"/>
    <property type="evidence" value="ECO:0007669"/>
    <property type="project" value="InterPro"/>
</dbReference>
<dbReference type="GO" id="GO:0046872">
    <property type="term" value="F:metal ion binding"/>
    <property type="evidence" value="ECO:0007669"/>
    <property type="project" value="UniProtKB-KW"/>
</dbReference>
<dbReference type="GO" id="GO:0006123">
    <property type="term" value="P:mitochondrial electron transport, cytochrome c to oxygen"/>
    <property type="evidence" value="ECO:0007669"/>
    <property type="project" value="InterPro"/>
</dbReference>
<dbReference type="CDD" id="cd00923">
    <property type="entry name" value="Cyt_c_Oxidase_Va"/>
    <property type="match status" value="1"/>
</dbReference>
<dbReference type="FunFam" id="1.25.40.40:FF:000002">
    <property type="entry name" value="cytochrome c oxidase subunit 5A, mitochondrial"/>
    <property type="match status" value="1"/>
</dbReference>
<dbReference type="Gene3D" id="1.25.40.40">
    <property type="entry name" value="Cytochrome c oxidase, subunit Va/VI"/>
    <property type="match status" value="1"/>
</dbReference>
<dbReference type="InterPro" id="IPR003204">
    <property type="entry name" value="Cyt_c_oxidase_su5A/6"/>
</dbReference>
<dbReference type="InterPro" id="IPR036545">
    <property type="entry name" value="Cyt_c_oxidase_su5A/6_sf"/>
</dbReference>
<dbReference type="PANTHER" id="PTHR14200">
    <property type="entry name" value="CYTOCHROME C OXIDASE POLYPEPTIDE"/>
    <property type="match status" value="1"/>
</dbReference>
<dbReference type="PANTHER" id="PTHR14200:SF16">
    <property type="entry name" value="CYTOCHROME C OXIDASE SUBUNIT 5A, MITOCHONDRIAL"/>
    <property type="match status" value="1"/>
</dbReference>
<dbReference type="Pfam" id="PF02284">
    <property type="entry name" value="COX5A"/>
    <property type="match status" value="1"/>
</dbReference>
<dbReference type="SUPFAM" id="SSF48479">
    <property type="entry name" value="Cytochrome c oxidase subunit E"/>
    <property type="match status" value="1"/>
</dbReference>
<comment type="function">
    <text evidence="2">Component of the cytochrome c oxidase, the last enzyme in the mitochondrial electron transport chain which drives oxidative phosphorylation. The respiratory chain contains 3 multisubunit complexes succinate dehydrogenase (complex II, CII), ubiquinol-cytochrome c oxidoreductase (cytochrome b-c1 complex, complex III, CIII) and cytochrome c oxidase (complex IV, CIV), that cooperate to transfer electrons derived from NADH and succinate to molecular oxygen, creating an electrochemical gradient over the inner membrane that drives transmembrane transport and the ATP synthase. Cytochrome c oxidase is the component of the respiratory chain that catalyzes the reduction of oxygen to water. Electrons originating from reduced cytochrome c in the intermembrane space (IMS) are transferred via the dinuclear copper A center (CU(A)) of subunit 2 and heme A of subunit 1 to the active site in subunit 1, a binuclear center (BNC) formed by heme A3 and copper B (CU(B)). The BNC reduces molecular oxygen to 2 water molecules using 4 electrons from cytochrome c in the IMS and 4 protons from the mitochondrial matrix.</text>
</comment>
<comment type="pathway">
    <text evidence="2">Energy metabolism; oxidative phosphorylation.</text>
</comment>
<comment type="subunit">
    <text evidence="1 4">Component of the cytochrome c oxidase (complex IV, CIV), a multisubunit enzyme composed of 14 subunits. The complex is composed of a catalytic core of 3 subunits MT-CO1, MT-CO2 and MT-CO3, encoded in the mitochondrial DNA, and 11 supernumerary subunits COX4I, COX5A, COX5B, COX6A, COX6B, COX6C, COX7A, COX7B, COX7C, COX8 and NDUFA4, which are encoded in the nuclear genome. The complex exists as a monomer or a dimer and forms supercomplexes (SCs) in the inner mitochondrial membrane with NADH-ubiquinone oxidoreductase (complex I, CI) and ubiquinol-cytochrome c oxidoreductase (cytochrome b-c1 complex, complex III, CIII), resulting in different assemblies (supercomplex SCI(1)III(2)IV(1) and megacomplex MCI(2)III(2)IV(2)) (By similarity). Interacts with AFG1L (By similarity). Interacts with RAB5IF (By similarity).</text>
</comment>
<comment type="subcellular location">
    <subcellularLocation>
        <location evidence="1">Mitochondrion inner membrane</location>
        <topology evidence="1">Peripheral membrane protein</topology>
        <orientation evidence="1">Matrix side</orientation>
    </subcellularLocation>
</comment>
<comment type="PTM">
    <text evidence="4">In response to mitochondrial stress, the precursor protein is ubiquitinated by the SIFI complex in the cytoplasm before mitochondrial import, leading to its degradation. Within the SIFI complex, UBR4 initiates ubiquitin chain that are further elongated or branched by KCMF1.</text>
</comment>
<comment type="similarity">
    <text evidence="5">Belongs to the cytochrome c oxidase subunit 5A family.</text>
</comment>
<organism>
    <name type="scientific">Saguinus labiatus</name>
    <name type="common">Red-chested mustached tamarin</name>
    <dbReference type="NCBI Taxonomy" id="78454"/>
    <lineage>
        <taxon>Eukaryota</taxon>
        <taxon>Metazoa</taxon>
        <taxon>Chordata</taxon>
        <taxon>Craniata</taxon>
        <taxon>Vertebrata</taxon>
        <taxon>Euteleostomi</taxon>
        <taxon>Mammalia</taxon>
        <taxon>Eutheria</taxon>
        <taxon>Euarchontoglires</taxon>
        <taxon>Primates</taxon>
        <taxon>Haplorrhini</taxon>
        <taxon>Platyrrhini</taxon>
        <taxon>Cebidae</taxon>
        <taxon>Callitrichinae</taxon>
        <taxon>Saguinus</taxon>
    </lineage>
</organism>
<evidence type="ECO:0000250" key="1">
    <source>
        <dbReference type="UniProtKB" id="P00426"/>
    </source>
</evidence>
<evidence type="ECO:0000250" key="2">
    <source>
        <dbReference type="UniProtKB" id="P00427"/>
    </source>
</evidence>
<evidence type="ECO:0000250" key="3">
    <source>
        <dbReference type="UniProtKB" id="P12787"/>
    </source>
</evidence>
<evidence type="ECO:0000250" key="4">
    <source>
        <dbReference type="UniProtKB" id="P20674"/>
    </source>
</evidence>
<evidence type="ECO:0000305" key="5"/>